<gene>
    <name type="ordered locus">Os07g0517000</name>
    <name type="ordered locus">LOC_Os07g33340</name>
    <name type="ORF">OSJNBa0036M16.110</name>
    <name type="ORF">P0650C03.25</name>
</gene>
<dbReference type="EC" id="3.6.4.13"/>
<dbReference type="EMBL" id="AP005103">
    <property type="protein sequence ID" value="BAC83715.1"/>
    <property type="molecule type" value="Genomic_DNA"/>
</dbReference>
<dbReference type="EMBL" id="AP005320">
    <property type="protein sequence ID" value="BAD31318.1"/>
    <property type="molecule type" value="Genomic_DNA"/>
</dbReference>
<dbReference type="EMBL" id="AP008213">
    <property type="protein sequence ID" value="BAF21701.1"/>
    <property type="status" value="ALT_SEQ"/>
    <property type="molecule type" value="Genomic_DNA"/>
</dbReference>
<dbReference type="EMBL" id="AP014963">
    <property type="status" value="NOT_ANNOTATED_CDS"/>
    <property type="molecule type" value="Genomic_DNA"/>
</dbReference>
<dbReference type="EMBL" id="AK064167">
    <property type="status" value="NOT_ANNOTATED_CDS"/>
    <property type="molecule type" value="mRNA"/>
</dbReference>
<dbReference type="SMR" id="Q0D622"/>
<dbReference type="FunCoup" id="Q0D622">
    <property type="interactions" value="2121"/>
</dbReference>
<dbReference type="STRING" id="39947.Q0D622"/>
<dbReference type="PaxDb" id="39947-Q0D622"/>
<dbReference type="KEGG" id="dosa:Os07g0517000"/>
<dbReference type="eggNOG" id="KOG0343">
    <property type="taxonomic scope" value="Eukaryota"/>
</dbReference>
<dbReference type="HOGENOM" id="CLU_003041_26_1_1"/>
<dbReference type="InParanoid" id="Q0D622"/>
<dbReference type="Proteomes" id="UP000000763">
    <property type="component" value="Chromosome 7"/>
</dbReference>
<dbReference type="Proteomes" id="UP000059680">
    <property type="component" value="Chromosome 7"/>
</dbReference>
<dbReference type="GO" id="GO:0005634">
    <property type="term" value="C:nucleus"/>
    <property type="evidence" value="ECO:0000318"/>
    <property type="project" value="GO_Central"/>
</dbReference>
<dbReference type="GO" id="GO:0005524">
    <property type="term" value="F:ATP binding"/>
    <property type="evidence" value="ECO:0007669"/>
    <property type="project" value="UniProtKB-KW"/>
</dbReference>
<dbReference type="GO" id="GO:0016887">
    <property type="term" value="F:ATP hydrolysis activity"/>
    <property type="evidence" value="ECO:0007669"/>
    <property type="project" value="RHEA"/>
</dbReference>
<dbReference type="GO" id="GO:0003723">
    <property type="term" value="F:RNA binding"/>
    <property type="evidence" value="ECO:0007669"/>
    <property type="project" value="UniProtKB-KW"/>
</dbReference>
<dbReference type="GO" id="GO:0003724">
    <property type="term" value="F:RNA helicase activity"/>
    <property type="evidence" value="ECO:0007669"/>
    <property type="project" value="UniProtKB-EC"/>
</dbReference>
<dbReference type="GO" id="GO:0006364">
    <property type="term" value="P:rRNA processing"/>
    <property type="evidence" value="ECO:0000318"/>
    <property type="project" value="GO_Central"/>
</dbReference>
<dbReference type="CDD" id="cd17941">
    <property type="entry name" value="DEADc_DDX10"/>
    <property type="match status" value="1"/>
</dbReference>
<dbReference type="CDD" id="cd18787">
    <property type="entry name" value="SF2_C_DEAD"/>
    <property type="match status" value="1"/>
</dbReference>
<dbReference type="Gene3D" id="3.40.50.300">
    <property type="entry name" value="P-loop containing nucleotide triphosphate hydrolases"/>
    <property type="match status" value="2"/>
</dbReference>
<dbReference type="InterPro" id="IPR011545">
    <property type="entry name" value="DEAD/DEAH_box_helicase_dom"/>
</dbReference>
<dbReference type="InterPro" id="IPR014001">
    <property type="entry name" value="Helicase_ATP-bd"/>
</dbReference>
<dbReference type="InterPro" id="IPR001650">
    <property type="entry name" value="Helicase_C-like"/>
</dbReference>
<dbReference type="InterPro" id="IPR027417">
    <property type="entry name" value="P-loop_NTPase"/>
</dbReference>
<dbReference type="InterPro" id="IPR014014">
    <property type="entry name" value="RNA_helicase_DEAD_Q_motif"/>
</dbReference>
<dbReference type="InterPro" id="IPR025313">
    <property type="entry name" value="SPB4-like_CTE"/>
</dbReference>
<dbReference type="PANTHER" id="PTHR24031">
    <property type="entry name" value="RNA HELICASE"/>
    <property type="match status" value="1"/>
</dbReference>
<dbReference type="Pfam" id="PF13959">
    <property type="entry name" value="CTE_SPB4"/>
    <property type="match status" value="1"/>
</dbReference>
<dbReference type="Pfam" id="PF00270">
    <property type="entry name" value="DEAD"/>
    <property type="match status" value="1"/>
</dbReference>
<dbReference type="Pfam" id="PF00271">
    <property type="entry name" value="Helicase_C"/>
    <property type="match status" value="1"/>
</dbReference>
<dbReference type="SMART" id="SM00487">
    <property type="entry name" value="DEXDc"/>
    <property type="match status" value="1"/>
</dbReference>
<dbReference type="SMART" id="SM01178">
    <property type="entry name" value="DUF4217"/>
    <property type="match status" value="1"/>
</dbReference>
<dbReference type="SMART" id="SM00490">
    <property type="entry name" value="HELICc"/>
    <property type="match status" value="1"/>
</dbReference>
<dbReference type="SUPFAM" id="SSF52540">
    <property type="entry name" value="P-loop containing nucleoside triphosphate hydrolases"/>
    <property type="match status" value="1"/>
</dbReference>
<dbReference type="PROSITE" id="PS51192">
    <property type="entry name" value="HELICASE_ATP_BIND_1"/>
    <property type="match status" value="1"/>
</dbReference>
<dbReference type="PROSITE" id="PS51194">
    <property type="entry name" value="HELICASE_CTER"/>
    <property type="match status" value="1"/>
</dbReference>
<dbReference type="PROSITE" id="PS51195">
    <property type="entry name" value="Q_MOTIF"/>
    <property type="match status" value="1"/>
</dbReference>
<name>RH32_ORYSJ</name>
<reference key="1">
    <citation type="journal article" date="2005" name="Nature">
        <title>The map-based sequence of the rice genome.</title>
        <authorList>
            <consortium name="International rice genome sequencing project (IRGSP)"/>
        </authorList>
    </citation>
    <scope>NUCLEOTIDE SEQUENCE [LARGE SCALE GENOMIC DNA]</scope>
    <source>
        <strain>cv. Nipponbare</strain>
    </source>
</reference>
<reference key="2">
    <citation type="journal article" date="2008" name="Nucleic Acids Res.">
        <title>The rice annotation project database (RAP-DB): 2008 update.</title>
        <authorList>
            <consortium name="The rice annotation project (RAP)"/>
        </authorList>
    </citation>
    <scope>GENOME REANNOTATION</scope>
    <source>
        <strain>cv. Nipponbare</strain>
    </source>
</reference>
<reference key="3">
    <citation type="journal article" date="2013" name="Rice">
        <title>Improvement of the Oryza sativa Nipponbare reference genome using next generation sequence and optical map data.</title>
        <authorList>
            <person name="Kawahara Y."/>
            <person name="de la Bastide M."/>
            <person name="Hamilton J.P."/>
            <person name="Kanamori H."/>
            <person name="McCombie W.R."/>
            <person name="Ouyang S."/>
            <person name="Schwartz D.C."/>
            <person name="Tanaka T."/>
            <person name="Wu J."/>
            <person name="Zhou S."/>
            <person name="Childs K.L."/>
            <person name="Davidson R.M."/>
            <person name="Lin H."/>
            <person name="Quesada-Ocampo L."/>
            <person name="Vaillancourt B."/>
            <person name="Sakai H."/>
            <person name="Lee S.S."/>
            <person name="Kim J."/>
            <person name="Numa H."/>
            <person name="Itoh T."/>
            <person name="Buell C.R."/>
            <person name="Matsumoto T."/>
        </authorList>
    </citation>
    <scope>GENOME REANNOTATION</scope>
    <source>
        <strain>cv. Nipponbare</strain>
    </source>
</reference>
<reference key="4">
    <citation type="journal article" date="2003" name="Science">
        <title>Collection, mapping, and annotation of over 28,000 cDNA clones from japonica rice.</title>
        <authorList>
            <consortium name="The rice full-length cDNA consortium"/>
        </authorList>
    </citation>
    <scope>NUCLEOTIDE SEQUENCE [LARGE SCALE MRNA] OF 250-773</scope>
    <source>
        <strain>cv. Nipponbare</strain>
    </source>
</reference>
<proteinExistence type="evidence at transcript level"/>
<accession>Q0D622</accession>
<accession>Q84Z30</accession>
<feature type="chain" id="PRO_0000282465" description="DEAD-box ATP-dependent RNA helicase 32">
    <location>
        <begin position="1"/>
        <end position="773"/>
    </location>
</feature>
<feature type="domain" description="Helicase ATP-binding" evidence="2">
    <location>
        <begin position="111"/>
        <end position="287"/>
    </location>
</feature>
<feature type="domain" description="Helicase C-terminal" evidence="3">
    <location>
        <begin position="309"/>
        <end position="462"/>
    </location>
</feature>
<feature type="region of interest" description="Disordered" evidence="4">
    <location>
        <begin position="28"/>
        <end position="71"/>
    </location>
</feature>
<feature type="region of interest" description="Disordered" evidence="4">
    <location>
        <begin position="699"/>
        <end position="755"/>
    </location>
</feature>
<feature type="coiled-coil region" evidence="1">
    <location>
        <begin position="664"/>
        <end position="715"/>
    </location>
</feature>
<feature type="short sequence motif" description="Q motif">
    <location>
        <begin position="80"/>
        <end position="108"/>
    </location>
</feature>
<feature type="short sequence motif" description="DEAD box">
    <location>
        <begin position="235"/>
        <end position="238"/>
    </location>
</feature>
<feature type="compositionally biased region" description="Low complexity" evidence="4">
    <location>
        <begin position="43"/>
        <end position="56"/>
    </location>
</feature>
<feature type="compositionally biased region" description="Basic residues" evidence="4">
    <location>
        <begin position="699"/>
        <end position="708"/>
    </location>
</feature>
<feature type="binding site" evidence="2">
    <location>
        <begin position="124"/>
        <end position="131"/>
    </location>
    <ligand>
        <name>ATP</name>
        <dbReference type="ChEBI" id="CHEBI:30616"/>
    </ligand>
</feature>
<organism>
    <name type="scientific">Oryza sativa subsp. japonica</name>
    <name type="common">Rice</name>
    <dbReference type="NCBI Taxonomy" id="39947"/>
    <lineage>
        <taxon>Eukaryota</taxon>
        <taxon>Viridiplantae</taxon>
        <taxon>Streptophyta</taxon>
        <taxon>Embryophyta</taxon>
        <taxon>Tracheophyta</taxon>
        <taxon>Spermatophyta</taxon>
        <taxon>Magnoliopsida</taxon>
        <taxon>Liliopsida</taxon>
        <taxon>Poales</taxon>
        <taxon>Poaceae</taxon>
        <taxon>BOP clade</taxon>
        <taxon>Oryzoideae</taxon>
        <taxon>Oryzeae</taxon>
        <taxon>Oryzinae</taxon>
        <taxon>Oryza</taxon>
        <taxon>Oryza sativa</taxon>
    </lineage>
</organism>
<evidence type="ECO:0000255" key="1"/>
<evidence type="ECO:0000255" key="2">
    <source>
        <dbReference type="PROSITE-ProRule" id="PRU00541"/>
    </source>
</evidence>
<evidence type="ECO:0000255" key="3">
    <source>
        <dbReference type="PROSITE-ProRule" id="PRU00542"/>
    </source>
</evidence>
<evidence type="ECO:0000256" key="4">
    <source>
        <dbReference type="SAM" id="MobiDB-lite"/>
    </source>
</evidence>
<evidence type="ECO:0000305" key="5"/>
<protein>
    <recommendedName>
        <fullName>DEAD-box ATP-dependent RNA helicase 32</fullName>
        <ecNumber>3.6.4.13</ecNumber>
    </recommendedName>
</protein>
<sequence>MRRPRSRGAAKQTRLREADEIRLLEAWIDAGKPARGTRPPPLSKSSSSPADTAAAKRGAKGAGGVPSKAAGEHPEYGACARFDELPLSNKTKDGLRKAGYTEMSEIQRAALPHALCGRDVLGAAKTGSGKTLAFVIPVLEKLYRERWGPEDGVGCIVLSPNKDLAGQIFNVFQKVGKLHGFSAACIVGNRKGLDEEKAVINNMNILVCTPGRLLQHMGETTNFDCSQIQQILVIDEADQVLDKNFQEQVDNVVSQLPKVRQTLLFSATQTKSVKDLARVSLKDPEYISVHEEATTATPDTLEQYAMIVPLEQKLNMLWSFIKRHLKSRILVFLSSVKQVKFVYEVFKKLRPGISLRCMHGRMKYEVQQAIVAEFKEGHSVLFSTDIFARGLDIEDVDWVVQVDCPENIALYIHRVGRTARYNKRGKALIFLCPEEEKMLEKLKAAESKIPIHIKKPNTEQLQQISQNIASVLVQYPNLQQLGKRAFVTYLKSVYLQSDKEVFDLSRFSMENFAAYAASLGLPVTPKIRFVSHKKNVPKKYMGDIDVKRMKRSSKPEVIEINPQAKSNLIEDDGDYDILYPKEQQTDVNMADGLDDVLYPKVSTADTNNEPEKVTQLGNKSVKKKKLKINVHRPLGTRVKFDDEGHTIPPFASIAEEVGSGDVIDKDKISQRYAEMLREMQEHDKEDKLEHKRILREKKLQKKLKLKRKRNEEMDAGSENSGSESDRDQRTASKGKKRYFNSDDEEGSKDAAKDGDVLAQQEALALKLLSKMHS</sequence>
<comment type="catalytic activity">
    <reaction>
        <text>ATP + H2O = ADP + phosphate + H(+)</text>
        <dbReference type="Rhea" id="RHEA:13065"/>
        <dbReference type="ChEBI" id="CHEBI:15377"/>
        <dbReference type="ChEBI" id="CHEBI:15378"/>
        <dbReference type="ChEBI" id="CHEBI:30616"/>
        <dbReference type="ChEBI" id="CHEBI:43474"/>
        <dbReference type="ChEBI" id="CHEBI:456216"/>
        <dbReference type="EC" id="3.6.4.13"/>
    </reaction>
</comment>
<comment type="domain">
    <text>The Q motif is unique to and characteristic of the DEAD box family of RNA helicases and controls ATP binding and hydrolysis.</text>
</comment>
<comment type="similarity">
    <text evidence="5">Belongs to the DEAD box helicase family. DDX10/DBP4 subfamily.</text>
</comment>
<comment type="sequence caution" evidence="5">
    <conflict type="erroneous gene model prediction">
        <sequence resource="EMBL-CDS" id="BAF21701"/>
    </conflict>
</comment>
<keyword id="KW-0067">ATP-binding</keyword>
<keyword id="KW-0175">Coiled coil</keyword>
<keyword id="KW-0347">Helicase</keyword>
<keyword id="KW-0378">Hydrolase</keyword>
<keyword id="KW-0547">Nucleotide-binding</keyword>
<keyword id="KW-1185">Reference proteome</keyword>
<keyword id="KW-0694">RNA-binding</keyword>